<organism>
    <name type="scientific">Gadus morhua</name>
    <name type="common">Atlantic cod</name>
    <dbReference type="NCBI Taxonomy" id="8049"/>
    <lineage>
        <taxon>Eukaryota</taxon>
        <taxon>Metazoa</taxon>
        <taxon>Chordata</taxon>
        <taxon>Craniata</taxon>
        <taxon>Vertebrata</taxon>
        <taxon>Euteleostomi</taxon>
        <taxon>Actinopterygii</taxon>
        <taxon>Neopterygii</taxon>
        <taxon>Teleostei</taxon>
        <taxon>Neoteleostei</taxon>
        <taxon>Acanthomorphata</taxon>
        <taxon>Zeiogadaria</taxon>
        <taxon>Gadariae</taxon>
        <taxon>Gadiformes</taxon>
        <taxon>Gadoidei</taxon>
        <taxon>Gadidae</taxon>
        <taxon>Gadus</taxon>
    </lineage>
</organism>
<proteinExistence type="inferred from homology"/>
<comment type="function">
    <text evidence="1 2">Component of SEC61 channel-forming translocon complex that mediates transport of signal peptide-containing precursor polypeptides across the endoplasmic reticulum (ER). Forms a ribosome receptor and a gated pore in the ER membrane, both functions required for cotranslational translocation of nascent polypeptides (By similarity). The SEC61 channel is also involved in ER membrane insertion of transmembrane proteins: it mediates membrane insertion of the first few transmembrane segments of proteins, while insertion of subsequent transmembrane regions of multi-pass membrane proteins is mediated by the multi-pass translocon (MPT) complex (By similarity).</text>
</comment>
<comment type="subunit">
    <text evidence="1 2">The SEC61 channel-forming translocon complex consists of channel-forming core components SEC61A1, SEC61B and SEC61G and different auxiliary components such as SEC62 and SEC63 (By similarity). The SEC61 channel associates with the multi-pass translocon (MPT) complex (By similarity).</text>
</comment>
<comment type="subcellular location">
    <subcellularLocation>
        <location evidence="1">Endoplasmic reticulum membrane</location>
        <topology evidence="4">Single-pass membrane protein</topology>
    </subcellularLocation>
</comment>
<comment type="similarity">
    <text evidence="4">Belongs to the SecE/SEC61-gamma family.</text>
</comment>
<accession>Q7SZU9</accession>
<sequence length="68" mass="7755">MDQIMQFVEPSRQFVKDSIRLVKRCTKPDRKEFQKIAMATAIGFAIMGFIGFFVKLIHIPINNIIVGG</sequence>
<keyword id="KW-0256">Endoplasmic reticulum</keyword>
<keyword id="KW-0472">Membrane</keyword>
<keyword id="KW-0653">Protein transport</keyword>
<keyword id="KW-1185">Reference proteome</keyword>
<keyword id="KW-0811">Translocation</keyword>
<keyword id="KW-0812">Transmembrane</keyword>
<keyword id="KW-1133">Transmembrane helix</keyword>
<keyword id="KW-0813">Transport</keyword>
<evidence type="ECO:0000250" key="1">
    <source>
        <dbReference type="UniProtKB" id="P60058"/>
    </source>
</evidence>
<evidence type="ECO:0000250" key="2">
    <source>
        <dbReference type="UniProtKB" id="P60059"/>
    </source>
</evidence>
<evidence type="ECO:0000255" key="3"/>
<evidence type="ECO:0000305" key="4"/>
<feature type="chain" id="PRO_0000104198" description="Protein transport protein Sec61 subunit gamma">
    <location>
        <begin position="1"/>
        <end position="68"/>
    </location>
</feature>
<feature type="topological domain" description="Cytoplasmic" evidence="3">
    <location>
        <begin position="1"/>
        <end position="32"/>
    </location>
</feature>
<feature type="transmembrane region" description="Helical" evidence="3">
    <location>
        <begin position="33"/>
        <end position="61"/>
    </location>
</feature>
<feature type="topological domain" description="Extracellular" evidence="3">
    <location>
        <begin position="62"/>
        <end position="68"/>
    </location>
</feature>
<reference key="1">
    <citation type="journal article" date="2003" name="J. Cell Sci.">
        <title>Protein translocation across the endoplasmic reticulum membrane in cold-adapted organisms.</title>
        <authorList>
            <person name="Romisch K."/>
            <person name="Collie N."/>
            <person name="Soto N."/>
            <person name="Logue J."/>
            <person name="Lindsay M."/>
            <person name="Scheper W."/>
            <person name="Cheng C.-H.C."/>
        </authorList>
    </citation>
    <scope>NUCLEOTIDE SEQUENCE [MRNA]</scope>
</reference>
<protein>
    <recommendedName>
        <fullName>Protein transport protein Sec61 subunit gamma</fullName>
    </recommendedName>
</protein>
<name>SC61G_GADMO</name>
<gene>
    <name type="primary">sec61g</name>
</gene>
<dbReference type="EMBL" id="AY281321">
    <property type="protein sequence ID" value="AAQ18693.1"/>
    <property type="molecule type" value="mRNA"/>
</dbReference>
<dbReference type="SMR" id="Q7SZU9"/>
<dbReference type="STRING" id="8049.ENSGMOP00000002242"/>
<dbReference type="HOGENOM" id="CLU_167752_2_0_1"/>
<dbReference type="OrthoDB" id="2401875at2759"/>
<dbReference type="TreeFam" id="TF300232"/>
<dbReference type="Proteomes" id="UP000694546">
    <property type="component" value="Unplaced"/>
</dbReference>
<dbReference type="GO" id="GO:0005789">
    <property type="term" value="C:endoplasmic reticulum membrane"/>
    <property type="evidence" value="ECO:0007669"/>
    <property type="project" value="UniProtKB-SubCell"/>
</dbReference>
<dbReference type="GO" id="GO:0008320">
    <property type="term" value="F:protein transmembrane transporter activity"/>
    <property type="evidence" value="ECO:0000250"/>
    <property type="project" value="UniProtKB"/>
</dbReference>
<dbReference type="GO" id="GO:0043022">
    <property type="term" value="F:ribosome binding"/>
    <property type="evidence" value="ECO:0000250"/>
    <property type="project" value="UniProtKB"/>
</dbReference>
<dbReference type="GO" id="GO:0006886">
    <property type="term" value="P:intracellular protein transport"/>
    <property type="evidence" value="ECO:0007669"/>
    <property type="project" value="InterPro"/>
</dbReference>
<dbReference type="GO" id="GO:0045047">
    <property type="term" value="P:protein targeting to ER"/>
    <property type="evidence" value="ECO:0000250"/>
    <property type="project" value="UniProtKB"/>
</dbReference>
<dbReference type="FunFam" id="1.20.5.820:FF:000001">
    <property type="entry name" value="Transport protein Sec61 subunit gamma"/>
    <property type="match status" value="1"/>
</dbReference>
<dbReference type="Gene3D" id="1.20.5.820">
    <property type="entry name" value="Preprotein translocase SecE subunit"/>
    <property type="match status" value="1"/>
</dbReference>
<dbReference type="HAMAP" id="MF_00422">
    <property type="entry name" value="SecE"/>
    <property type="match status" value="1"/>
</dbReference>
<dbReference type="InterPro" id="IPR023391">
    <property type="entry name" value="Prot_translocase_SecE_dom_sf"/>
</dbReference>
<dbReference type="InterPro" id="IPR008158">
    <property type="entry name" value="Translocase_Sec61-g"/>
</dbReference>
<dbReference type="InterPro" id="IPR001901">
    <property type="entry name" value="Translocase_SecE/Sec61-g"/>
</dbReference>
<dbReference type="NCBIfam" id="TIGR00327">
    <property type="entry name" value="secE_euk_arch"/>
    <property type="match status" value="1"/>
</dbReference>
<dbReference type="PANTHER" id="PTHR12309">
    <property type="entry name" value="SEC61 GAMMA SUBUNIT"/>
    <property type="match status" value="1"/>
</dbReference>
<dbReference type="Pfam" id="PF00584">
    <property type="entry name" value="SecE"/>
    <property type="match status" value="1"/>
</dbReference>
<dbReference type="SUPFAM" id="SSF103456">
    <property type="entry name" value="Preprotein translocase SecE subunit"/>
    <property type="match status" value="1"/>
</dbReference>
<dbReference type="PROSITE" id="PS01067">
    <property type="entry name" value="SECE_SEC61G"/>
    <property type="match status" value="1"/>
</dbReference>